<keyword id="KW-0249">Electron transport</keyword>
<keyword id="KW-0472">Membrane</keyword>
<keyword id="KW-0496">Mitochondrion</keyword>
<keyword id="KW-0999">Mitochondrion inner membrane</keyword>
<keyword id="KW-0520">NAD</keyword>
<keyword id="KW-0679">Respiratory chain</keyword>
<keyword id="KW-1278">Translocase</keyword>
<keyword id="KW-0812">Transmembrane</keyword>
<keyword id="KW-1133">Transmembrane helix</keyword>
<keyword id="KW-0813">Transport</keyword>
<keyword id="KW-0830">Ubiquinone</keyword>
<evidence type="ECO:0000250" key="1">
    <source>
        <dbReference type="UniProtKB" id="P03891"/>
    </source>
</evidence>
<evidence type="ECO:0000250" key="2">
    <source>
        <dbReference type="UniProtKB" id="P03892"/>
    </source>
</evidence>
<evidence type="ECO:0000255" key="3"/>
<evidence type="ECO:0000305" key="4"/>
<sequence length="347" mass="38979">MNPMILLMLLITILSGTSIVMMSSHWFLTWLGFEMNMMAMIPVLMKKYNPRAMEAATKYFLTQATASMILVLGIIINLIHSGQWTIMAMESYSASTLLTIALVMKLGLAPFHFWVPEVTQGVSLNSGLILLTWQKIAPLSLLYQIYSSVNTNILLVMSLLSIMVGGWGGLNQTQLRKIMAYSSIAHMGWMIMIMIYNPNLSLLNLLIYILMTSSMFMLLMFNSTISTLALSRTWNINPIITTTILIILLSLGGLPPLSGFMPKWMIIQELTKNDSVILPAVMAILALLNLFFYMRLAYSSSLTMFPTTNNTKMVWQFQPMNVSFMMTSLISISIMALPLTPLAMILY</sequence>
<accession>Q2TQ20</accession>
<organism>
    <name type="scientific">Sylvisorex johnstoni</name>
    <name type="common">Johnston's forest shrew</name>
    <dbReference type="NCBI Taxonomy" id="128150"/>
    <lineage>
        <taxon>Eukaryota</taxon>
        <taxon>Metazoa</taxon>
        <taxon>Chordata</taxon>
        <taxon>Craniata</taxon>
        <taxon>Vertebrata</taxon>
        <taxon>Euteleostomi</taxon>
        <taxon>Mammalia</taxon>
        <taxon>Eutheria</taxon>
        <taxon>Laurasiatheria</taxon>
        <taxon>Eulipotyphla</taxon>
        <taxon>Soricidae</taxon>
        <taxon>Crocidurinae</taxon>
        <taxon>Sylvisorex</taxon>
    </lineage>
</organism>
<name>NU2M_SYLJO</name>
<dbReference type="EC" id="7.1.1.2" evidence="1"/>
<dbReference type="EMBL" id="AY691832">
    <property type="protein sequence ID" value="AAW29755.1"/>
    <property type="molecule type" value="Genomic_DNA"/>
</dbReference>
<dbReference type="SMR" id="Q2TQ20"/>
<dbReference type="GO" id="GO:0005743">
    <property type="term" value="C:mitochondrial inner membrane"/>
    <property type="evidence" value="ECO:0000250"/>
    <property type="project" value="UniProtKB"/>
</dbReference>
<dbReference type="GO" id="GO:0008137">
    <property type="term" value="F:NADH dehydrogenase (ubiquinone) activity"/>
    <property type="evidence" value="ECO:0000250"/>
    <property type="project" value="UniProtKB"/>
</dbReference>
<dbReference type="GO" id="GO:0006120">
    <property type="term" value="P:mitochondrial electron transport, NADH to ubiquinone"/>
    <property type="evidence" value="ECO:0000250"/>
    <property type="project" value="UniProtKB"/>
</dbReference>
<dbReference type="GO" id="GO:0032981">
    <property type="term" value="P:mitochondrial respiratory chain complex I assembly"/>
    <property type="evidence" value="ECO:0000250"/>
    <property type="project" value="UniProtKB"/>
</dbReference>
<dbReference type="InterPro" id="IPR050175">
    <property type="entry name" value="Complex_I_Subunit_2"/>
</dbReference>
<dbReference type="InterPro" id="IPR010933">
    <property type="entry name" value="NADH_DH_su2_C"/>
</dbReference>
<dbReference type="InterPro" id="IPR003917">
    <property type="entry name" value="NADH_UbQ_OxRdtase_chain2"/>
</dbReference>
<dbReference type="InterPro" id="IPR001750">
    <property type="entry name" value="ND/Mrp_TM"/>
</dbReference>
<dbReference type="PANTHER" id="PTHR46552">
    <property type="entry name" value="NADH-UBIQUINONE OXIDOREDUCTASE CHAIN 2"/>
    <property type="match status" value="1"/>
</dbReference>
<dbReference type="PANTHER" id="PTHR46552:SF1">
    <property type="entry name" value="NADH-UBIQUINONE OXIDOREDUCTASE CHAIN 2"/>
    <property type="match status" value="1"/>
</dbReference>
<dbReference type="Pfam" id="PF06444">
    <property type="entry name" value="NADH_dehy_S2_C"/>
    <property type="match status" value="1"/>
</dbReference>
<dbReference type="Pfam" id="PF00361">
    <property type="entry name" value="Proton_antipo_M"/>
    <property type="match status" value="1"/>
</dbReference>
<dbReference type="PRINTS" id="PR01436">
    <property type="entry name" value="NADHDHGNASE2"/>
</dbReference>
<gene>
    <name evidence="1" type="primary">MT-ND2</name>
    <name type="synonym">MTND2</name>
    <name type="synonym">NADH2</name>
    <name type="synonym">ND2</name>
</gene>
<proteinExistence type="inferred from homology"/>
<reference key="1">
    <citation type="submission" date="2004-07" db="EMBL/GenBank/DDBJ databases">
        <title>Phylogeny, phylogeography, and geographic variation of Sylvisorex howelli, an endemic shrew of the Eastern Arc mountains.</title>
        <authorList>
            <person name="Stanley W.T."/>
            <person name="Olson L.E."/>
        </authorList>
    </citation>
    <scope>NUCLEOTIDE SEQUENCE [GENOMIC DNA]</scope>
</reference>
<comment type="function">
    <text evidence="1">Core subunit of the mitochondrial membrane respiratory chain NADH dehydrogenase (Complex I) which catalyzes electron transfer from NADH through the respiratory chain, using ubiquinone as an electron acceptor. Essential for the catalytic activity and assembly of complex I.</text>
</comment>
<comment type="catalytic activity">
    <reaction evidence="1">
        <text>a ubiquinone + NADH + 5 H(+)(in) = a ubiquinol + NAD(+) + 4 H(+)(out)</text>
        <dbReference type="Rhea" id="RHEA:29091"/>
        <dbReference type="Rhea" id="RHEA-COMP:9565"/>
        <dbReference type="Rhea" id="RHEA-COMP:9566"/>
        <dbReference type="ChEBI" id="CHEBI:15378"/>
        <dbReference type="ChEBI" id="CHEBI:16389"/>
        <dbReference type="ChEBI" id="CHEBI:17976"/>
        <dbReference type="ChEBI" id="CHEBI:57540"/>
        <dbReference type="ChEBI" id="CHEBI:57945"/>
        <dbReference type="EC" id="7.1.1.2"/>
    </reaction>
</comment>
<comment type="subunit">
    <text evidence="1 2">Core subunit of respiratory chain NADH dehydrogenase (Complex I) which is composed of 45 different subunits. Interacts with TMEM242 (By similarity).</text>
</comment>
<comment type="subcellular location">
    <subcellularLocation>
        <location evidence="2">Mitochondrion inner membrane</location>
        <topology evidence="3">Multi-pass membrane protein</topology>
    </subcellularLocation>
</comment>
<comment type="similarity">
    <text evidence="4">Belongs to the complex I subunit 2 family.</text>
</comment>
<geneLocation type="mitochondrion"/>
<feature type="chain" id="PRO_0000226714" description="NADH-ubiquinone oxidoreductase chain 2">
    <location>
        <begin position="1"/>
        <end position="347"/>
    </location>
</feature>
<feature type="transmembrane region" description="Helical" evidence="3">
    <location>
        <begin position="3"/>
        <end position="23"/>
    </location>
</feature>
<feature type="transmembrane region" description="Helical" evidence="3">
    <location>
        <begin position="25"/>
        <end position="45"/>
    </location>
</feature>
<feature type="transmembrane region" description="Helical" evidence="3">
    <location>
        <begin position="59"/>
        <end position="79"/>
    </location>
</feature>
<feature type="transmembrane region" description="Helical" evidence="3">
    <location>
        <begin position="96"/>
        <end position="116"/>
    </location>
</feature>
<feature type="transmembrane region" description="Helical" evidence="3">
    <location>
        <begin position="122"/>
        <end position="142"/>
    </location>
</feature>
<feature type="transmembrane region" description="Helical" evidence="3">
    <location>
        <begin position="149"/>
        <end position="169"/>
    </location>
</feature>
<feature type="transmembrane region" description="Helical" evidence="3">
    <location>
        <begin position="178"/>
        <end position="198"/>
    </location>
</feature>
<feature type="transmembrane region" description="Helical" evidence="3">
    <location>
        <begin position="201"/>
        <end position="221"/>
    </location>
</feature>
<feature type="transmembrane region" description="Helical" evidence="3">
    <location>
        <begin position="239"/>
        <end position="259"/>
    </location>
</feature>
<feature type="transmembrane region" description="Helical" evidence="3">
    <location>
        <begin position="274"/>
        <end position="294"/>
    </location>
</feature>
<feature type="transmembrane region" description="Helical" evidence="3">
    <location>
        <begin position="326"/>
        <end position="346"/>
    </location>
</feature>
<protein>
    <recommendedName>
        <fullName evidence="1">NADH-ubiquinone oxidoreductase chain 2</fullName>
        <ecNumber evidence="1">7.1.1.2</ecNumber>
    </recommendedName>
    <alternativeName>
        <fullName>NADH dehydrogenase subunit 2</fullName>
    </alternativeName>
</protein>